<evidence type="ECO:0000269" key="1">
    <source>
    </source>
</evidence>
<evidence type="ECO:0000269" key="2">
    <source>
    </source>
</evidence>
<evidence type="ECO:0000269" key="3">
    <source>
    </source>
</evidence>
<evidence type="ECO:0000303" key="4">
    <source>
    </source>
</evidence>
<evidence type="ECO:0000303" key="5">
    <source>
    </source>
</evidence>
<evidence type="ECO:0000305" key="6"/>
<evidence type="ECO:0000305" key="7">
    <source>
    </source>
</evidence>
<evidence type="ECO:0000312" key="8">
    <source>
        <dbReference type="EMBL" id="ACS39628.1"/>
    </source>
</evidence>
<evidence type="ECO:0007744" key="9">
    <source>
        <dbReference type="PDB" id="6MI5"/>
    </source>
</evidence>
<evidence type="ECO:0007744" key="10">
    <source>
        <dbReference type="PDB" id="8FNS"/>
    </source>
</evidence>
<evidence type="ECO:0007829" key="11">
    <source>
        <dbReference type="PDB" id="6MI5"/>
    </source>
</evidence>
<evidence type="ECO:0007829" key="12">
    <source>
        <dbReference type="PDB" id="8FNS"/>
    </source>
</evidence>
<accession>C5B164</accession>
<keyword id="KW-0002">3D-structure</keyword>
<keyword id="KW-0479">Metal-binding</keyword>
<keyword id="KW-0574">Periplasm</keyword>
<keyword id="KW-1185">Reference proteome</keyword>
<keyword id="KW-0677">Repeat</keyword>
<keyword id="KW-0732">Signal</keyword>
<sequence length="133" mass="13846">MAFRLSSAVLLAALVAAPAYAAPTTTTKVDIAAFDPDKDGTIDLKEALAAGSAAFDKLDPDKDGTLDAKELKGRVSEADLKKLDPDNDGTLDKKEYLAAVEAQFKAANPDNDGTIDARELASPAGSALVNLIR</sequence>
<name>LANM_METEA</name>
<organism>
    <name type="scientific">Methylorubrum extorquens (strain ATCC 14718 / DSM 1338 / JCM 2805 / NCIMB 9133 / AM1)</name>
    <name type="common">Methylobacterium extorquens</name>
    <dbReference type="NCBI Taxonomy" id="272630"/>
    <lineage>
        <taxon>Bacteria</taxon>
        <taxon>Pseudomonadati</taxon>
        <taxon>Pseudomonadota</taxon>
        <taxon>Alphaproteobacteria</taxon>
        <taxon>Hyphomicrobiales</taxon>
        <taxon>Methylobacteriaceae</taxon>
        <taxon>Methylorubrum</taxon>
    </lineage>
</organism>
<protein>
    <recommendedName>
        <fullName evidence="4 5">Lanmodulin</fullName>
        <shortName evidence="4 5">LanM</shortName>
    </recommendedName>
    <alternativeName>
        <fullName evidence="4">Lanthanide-binding protein</fullName>
        <shortName evidence="4">Ln(3+)-binding protein</shortName>
    </alternativeName>
</protein>
<reference key="1">
    <citation type="journal article" date="2009" name="PLoS ONE">
        <title>Methylobacterium genome sequences: a reference blueprint to investigate microbial metabolism of C1 compounds from natural and industrial sources.</title>
        <authorList>
            <person name="Vuilleumier S."/>
            <person name="Chistoserdova L."/>
            <person name="Lee M.-C."/>
            <person name="Bringel F."/>
            <person name="Lajus A."/>
            <person name="Zhou Y."/>
            <person name="Gourion B."/>
            <person name="Barbe V."/>
            <person name="Chang J."/>
            <person name="Cruveiller S."/>
            <person name="Dossat C."/>
            <person name="Gillett W."/>
            <person name="Gruffaz C."/>
            <person name="Haugen E."/>
            <person name="Hourcade E."/>
            <person name="Levy R."/>
            <person name="Mangenot S."/>
            <person name="Muller E."/>
            <person name="Nadalig T."/>
            <person name="Pagni M."/>
            <person name="Penny C."/>
            <person name="Peyraud R."/>
            <person name="Robinson D.G."/>
            <person name="Roche D."/>
            <person name="Rouy Z."/>
            <person name="Saenampechek C."/>
            <person name="Salvignol G."/>
            <person name="Vallenet D."/>
            <person name="Wu Z."/>
            <person name="Marx C.J."/>
            <person name="Vorholt J.A."/>
            <person name="Olson M.V."/>
            <person name="Kaul R."/>
            <person name="Weissenbach J."/>
            <person name="Medigue C."/>
            <person name="Lidstrom M.E."/>
        </authorList>
    </citation>
    <scope>NUCLEOTIDE SEQUENCE [LARGE SCALE GENOMIC DNA]</scope>
    <source>
        <strain>ATCC 14718 / DSM 1338 / JCM 2805 / NCIMB 9133 / AM1</strain>
    </source>
</reference>
<reference key="2">
    <citation type="journal article" date="2018" name="J. Am. Chem. Soc.">
        <title>Lanmodulin: A Highly Selective Lanthanide-Binding Protein from a Lanthanide-Utilizing Bacterium.</title>
        <authorList>
            <person name="Cotruvo J.A. Jr."/>
            <person name="Featherston E.R."/>
            <person name="Mattocks J.A."/>
            <person name="Ho J.V."/>
            <person name="Laremore T.N."/>
        </authorList>
    </citation>
    <scope>IDENTIFICATION BY MASS SPECTROMETRY</scope>
    <scope>FUNCTION</scope>
    <scope>SUBCELLULAR LOCATION</scope>
    <scope>MASS SPECTROMETRY</scope>
    <scope>SUBUNIT</scope>
    <scope>MUTAGENESIS OF PRO-36; PRO-60; PRO-85 AND PRO-109</scope>
    <source>
        <strain>ATCC 14718 / DSM 1338 / JCM 2805 / NCIMB 9133 / AM1</strain>
    </source>
</reference>
<reference key="3">
    <citation type="journal article" date="2020" name="Inorg. Chem.">
        <title>Selective and Efficient Biomacromolecular Extraction of Rare-Earth Elements using Lanmodulin.</title>
        <authorList>
            <person name="Deblonde G.J."/>
            <person name="Mattocks J.A."/>
            <person name="Park D.M."/>
            <person name="Reed D.W."/>
            <person name="Cotruvo J.A. Jr."/>
            <person name="Jiao Y."/>
        </authorList>
    </citation>
    <scope>BIOTECHNOLOGY</scope>
    <scope>BIOPHYSICOCHEMICAL PROPERTIES</scope>
</reference>
<reference evidence="9" key="4">
    <citation type="journal article" date="2019" name="Biochemistry">
        <title>Structural Basis for Rare Earth Element Recognition by Methylobacterium extorquens Lanmodulin.</title>
        <authorList>
            <person name="Cook E.C."/>
            <person name="Featherston E.R."/>
            <person name="Showalter S.A."/>
            <person name="Cotruvo J.A."/>
        </authorList>
    </citation>
    <scope>STRUCTURE BY NMR OF 23-133 IN COMPLEX WITH Y(3+)</scope>
    <source>
        <strain>ATCC 14718 / DSM 1338 / JCM 2805 / NCIMB 9133 / AM1</strain>
    </source>
</reference>
<reference evidence="10" key="5">
    <citation type="journal article" date="2023" name="Nature">
        <title>Enhanced rare-earth separation with a metal-sensitive lanmodulin dimer.</title>
        <authorList>
            <person name="Mattocks J.A."/>
            <person name="Jung J.J."/>
            <person name="Lin C.Y."/>
            <person name="Dong Z."/>
            <person name="Yennawar N.H."/>
            <person name="Featherston E.R."/>
            <person name="Kang-Yun C.S."/>
            <person name="Hamilton T.A."/>
            <person name="Park D.M."/>
            <person name="Boal A.K."/>
            <person name="Cotruvo J.A."/>
        </authorList>
    </citation>
    <scope>X-RAY CRYSTALLOGRAPHY (1.01 ANGSTROMS) OF 29-133 IN COMPLEX WITH ND(3+)</scope>
    <source>
        <strain>ATCC 14718 / DSM 1338 / JCM 2805 / NCIMB 9133 / AM1</strain>
    </source>
</reference>
<feature type="signal peptide" evidence="1">
    <location>
        <begin position="1"/>
        <end position="21"/>
    </location>
</feature>
<feature type="chain" id="PRO_5002948339" description="Lanmodulin">
    <location>
        <begin position="22"/>
        <end position="133"/>
    </location>
</feature>
<feature type="domain" description="EF-hand 1" evidence="7">
    <location>
        <begin position="35"/>
        <end position="46"/>
    </location>
</feature>
<feature type="domain" description="EF-hand 2" evidence="7">
    <location>
        <begin position="59"/>
        <end position="70"/>
    </location>
</feature>
<feature type="domain" description="EF-hand 3" evidence="7">
    <location>
        <begin position="84"/>
        <end position="95"/>
    </location>
</feature>
<feature type="domain" description="EF-hand 4" evidence="7">
    <location>
        <begin position="108"/>
        <end position="119"/>
    </location>
</feature>
<feature type="binding site" evidence="3 10">
    <location>
        <position position="35"/>
    </location>
    <ligand>
        <name>Nd(3+)</name>
        <dbReference type="ChEBI" id="CHEBI:229785"/>
        <label>1</label>
    </ligand>
</feature>
<feature type="binding site" evidence="3 10">
    <location>
        <position position="37"/>
    </location>
    <ligand>
        <name>Nd(3+)</name>
        <dbReference type="ChEBI" id="CHEBI:229785"/>
        <label>1</label>
    </ligand>
</feature>
<feature type="binding site" evidence="3 10">
    <location>
        <position position="39"/>
    </location>
    <ligand>
        <name>Nd(3+)</name>
        <dbReference type="ChEBI" id="CHEBI:229785"/>
        <label>1</label>
    </ligand>
</feature>
<feature type="binding site" evidence="3 10">
    <location>
        <position position="41"/>
    </location>
    <ligand>
        <name>Nd(3+)</name>
        <dbReference type="ChEBI" id="CHEBI:229785"/>
        <label>1</label>
    </ligand>
</feature>
<feature type="binding site" evidence="3 10">
    <location>
        <position position="46"/>
    </location>
    <ligand>
        <name>Nd(3+)</name>
        <dbReference type="ChEBI" id="CHEBI:229785"/>
        <label>1</label>
    </ligand>
</feature>
<feature type="binding site" evidence="3 10">
    <location>
        <position position="59"/>
    </location>
    <ligand>
        <name>Nd(3+)</name>
        <dbReference type="ChEBI" id="CHEBI:229785"/>
        <label>2</label>
    </ligand>
</feature>
<feature type="binding site" evidence="3 10">
    <location>
        <position position="61"/>
    </location>
    <ligand>
        <name>Nd(3+)</name>
        <dbReference type="ChEBI" id="CHEBI:229785"/>
        <label>2</label>
    </ligand>
</feature>
<feature type="binding site" evidence="3 10">
    <location>
        <position position="63"/>
    </location>
    <ligand>
        <name>Nd(3+)</name>
        <dbReference type="ChEBI" id="CHEBI:229785"/>
        <label>2</label>
    </ligand>
</feature>
<feature type="binding site" evidence="3 10">
    <location>
        <position position="65"/>
    </location>
    <ligand>
        <name>Nd(3+)</name>
        <dbReference type="ChEBI" id="CHEBI:229785"/>
        <label>2</label>
    </ligand>
</feature>
<feature type="binding site" evidence="3 10">
    <location>
        <position position="70"/>
    </location>
    <ligand>
        <name>Nd(3+)</name>
        <dbReference type="ChEBI" id="CHEBI:229785"/>
        <label>2</label>
    </ligand>
</feature>
<feature type="binding site" evidence="3 10">
    <location>
        <position position="84"/>
    </location>
    <ligand>
        <name>Nd(3+)</name>
        <dbReference type="ChEBI" id="CHEBI:229785"/>
        <label>3</label>
    </ligand>
</feature>
<feature type="binding site" evidence="3 10">
    <location>
        <position position="86"/>
    </location>
    <ligand>
        <name>Nd(3+)</name>
        <dbReference type="ChEBI" id="CHEBI:229785"/>
        <label>3</label>
    </ligand>
</feature>
<feature type="binding site" evidence="3 10">
    <location>
        <position position="88"/>
    </location>
    <ligand>
        <name>Nd(3+)</name>
        <dbReference type="ChEBI" id="CHEBI:229785"/>
        <label>3</label>
    </ligand>
</feature>
<feature type="binding site" evidence="3 10">
    <location>
        <position position="90"/>
    </location>
    <ligand>
        <name>Nd(3+)</name>
        <dbReference type="ChEBI" id="CHEBI:229785"/>
        <label>3</label>
    </ligand>
</feature>
<feature type="binding site" evidence="3 10">
    <location>
        <position position="95"/>
    </location>
    <ligand>
        <name>Nd(3+)</name>
        <dbReference type="ChEBI" id="CHEBI:229785"/>
        <label>3</label>
    </ligand>
</feature>
<feature type="binding site" evidence="3 10">
    <location>
        <position position="108"/>
    </location>
    <ligand>
        <name>Nd(3+)</name>
        <dbReference type="ChEBI" id="CHEBI:229785"/>
        <label>4</label>
    </ligand>
</feature>
<feature type="binding site" evidence="3 10">
    <location>
        <position position="110"/>
    </location>
    <ligand>
        <name>Nd(3+)</name>
        <dbReference type="ChEBI" id="CHEBI:229785"/>
        <label>4</label>
    </ligand>
</feature>
<feature type="binding site" evidence="3 10">
    <location>
        <position position="112"/>
    </location>
    <ligand>
        <name>Nd(3+)</name>
        <dbReference type="ChEBI" id="CHEBI:229785"/>
        <label>4</label>
    </ligand>
</feature>
<feature type="binding site" evidence="3 10">
    <location>
        <position position="114"/>
    </location>
    <ligand>
        <name>Nd(3+)</name>
        <dbReference type="ChEBI" id="CHEBI:229785"/>
        <label>4</label>
    </ligand>
</feature>
<feature type="binding site" evidence="3 10">
    <location>
        <position position="119"/>
    </location>
    <ligand>
        <name>Nd(3+)</name>
        <dbReference type="ChEBI" id="CHEBI:229785"/>
        <label>4</label>
    </ligand>
</feature>
<feature type="mutagenesis site" description="The mutant protein shows altered metal-binding properties, it is significantly more conformationally sensitive to Ca(2+); when associated with A-60 and A-85 and A-109." evidence="1">
    <original>P</original>
    <variation>A</variation>
    <location>
        <position position="36"/>
    </location>
</feature>
<feature type="mutagenesis site" description="The mutant protein shows altered metal-binding properties, it is significantly more conformationally sensitive to Ca(2+); when associated with A-36 and A-85 and A-109." evidence="1">
    <original>P</original>
    <variation>A</variation>
    <location>
        <position position="60"/>
    </location>
</feature>
<feature type="mutagenesis site" description="The mutant protein shows altered metal-binding properties, it is significantly more conformationally sensitive to Ca(2+); when associated with A-36 and A-60 and A-109." evidence="1">
    <original>P</original>
    <variation>A</variation>
    <location>
        <position position="85"/>
    </location>
</feature>
<feature type="mutagenesis site" description="The mutant protein shows altered metal-binding properties, it is significantly more conformationally sensitive to Ca(2+); when associated with A-36 and A-60 and A-85." evidence="1">
    <original>P</original>
    <variation>A</variation>
    <location>
        <position position="109"/>
    </location>
</feature>
<feature type="helix" evidence="11">
    <location>
        <begin position="24"/>
        <end position="27"/>
    </location>
</feature>
<feature type="helix" evidence="12">
    <location>
        <begin position="31"/>
        <end position="34"/>
    </location>
</feature>
<feature type="strand" evidence="12">
    <location>
        <begin position="39"/>
        <end position="43"/>
    </location>
</feature>
<feature type="helix" evidence="12">
    <location>
        <begin position="44"/>
        <end position="58"/>
    </location>
</feature>
<feature type="strand" evidence="12">
    <location>
        <begin position="63"/>
        <end position="66"/>
    </location>
</feature>
<feature type="turn" evidence="12">
    <location>
        <begin position="68"/>
        <end position="74"/>
    </location>
</feature>
<feature type="helix" evidence="12">
    <location>
        <begin position="77"/>
        <end position="83"/>
    </location>
</feature>
<feature type="strand" evidence="11">
    <location>
        <begin position="85"/>
        <end position="91"/>
    </location>
</feature>
<feature type="helix" evidence="12">
    <location>
        <begin position="93"/>
        <end position="107"/>
    </location>
</feature>
<feature type="strand" evidence="12">
    <location>
        <begin position="112"/>
        <end position="115"/>
    </location>
</feature>
<feature type="helix" evidence="12">
    <location>
        <begin position="117"/>
        <end position="121"/>
    </location>
</feature>
<feature type="helix" evidence="12">
    <location>
        <begin position="123"/>
        <end position="132"/>
    </location>
</feature>
<gene>
    <name evidence="4" type="primary">lanM</name>
    <name evidence="8" type="ordered locus">MexAM1_META1p1786</name>
</gene>
<proteinExistence type="evidence at protein level"/>
<dbReference type="EMBL" id="CP001510">
    <property type="protein sequence ID" value="ACS39628.1"/>
    <property type="molecule type" value="Genomic_DNA"/>
</dbReference>
<dbReference type="RefSeq" id="WP_003601797.1">
    <property type="nucleotide sequence ID" value="NC_012808.1"/>
</dbReference>
<dbReference type="PDB" id="6MI5">
    <property type="method" value="NMR"/>
    <property type="chains" value="X=23-133"/>
</dbReference>
<dbReference type="PDB" id="8FNS">
    <property type="method" value="X-ray"/>
    <property type="resolution" value="1.01 A"/>
    <property type="chains" value="A=29-133"/>
</dbReference>
<dbReference type="PDBsum" id="6MI5"/>
<dbReference type="PDBsum" id="8FNS"/>
<dbReference type="BMRB" id="C5B164"/>
<dbReference type="SMR" id="C5B164"/>
<dbReference type="STRING" id="272630.MexAM1_META1p1786"/>
<dbReference type="KEGG" id="mea:Mex_1p1786"/>
<dbReference type="eggNOG" id="COG5126">
    <property type="taxonomic scope" value="Bacteria"/>
</dbReference>
<dbReference type="HOGENOM" id="CLU_091273_5_0_5"/>
<dbReference type="OrthoDB" id="8453759at2"/>
<dbReference type="Proteomes" id="UP000009081">
    <property type="component" value="Chromosome"/>
</dbReference>
<dbReference type="GO" id="GO:0042597">
    <property type="term" value="C:periplasmic space"/>
    <property type="evidence" value="ECO:0007669"/>
    <property type="project" value="UniProtKB-SubCell"/>
</dbReference>
<dbReference type="GO" id="GO:0005509">
    <property type="term" value="F:calcium ion binding"/>
    <property type="evidence" value="ECO:0007669"/>
    <property type="project" value="InterPro"/>
</dbReference>
<dbReference type="Gene3D" id="1.10.238.10">
    <property type="entry name" value="EF-hand"/>
    <property type="match status" value="2"/>
</dbReference>
<dbReference type="InterPro" id="IPR011992">
    <property type="entry name" value="EF-hand-dom_pair"/>
</dbReference>
<dbReference type="InterPro" id="IPR018247">
    <property type="entry name" value="EF_Hand_1_Ca_BS"/>
</dbReference>
<dbReference type="InterPro" id="IPR002048">
    <property type="entry name" value="EF_hand_dom"/>
</dbReference>
<dbReference type="Pfam" id="PF13202">
    <property type="entry name" value="EF-hand_5"/>
    <property type="match status" value="3"/>
</dbReference>
<dbReference type="SUPFAM" id="SSF47473">
    <property type="entry name" value="EF-hand"/>
    <property type="match status" value="1"/>
</dbReference>
<dbReference type="PROSITE" id="PS00018">
    <property type="entry name" value="EF_HAND_1"/>
    <property type="match status" value="2"/>
</dbReference>
<dbReference type="PROSITE" id="PS50222">
    <property type="entry name" value="EF_HAND_2"/>
    <property type="match status" value="3"/>
</dbReference>
<comment type="function">
    <text evidence="1">High-affinity lanthanide (Ln)-binding protein. Shows 100 million-fold selectivity for La(3+) over Ca(2+). Binds 3 equiv of Ln(3+) with picomolar affinity and a fourth with approximately micromolar affinity. May be involved in receiving and then transporting lanthanides (such as La(3+), Nd(3+) and Sm(3+)) to a specific periplasmic destination.</text>
</comment>
<comment type="biophysicochemical properties">
    <phDependence>
        <text evidence="2">REE-LanM complexes are remarkably resilient under acidic conditions, retaining REE binding down to pH 2.5.</text>
    </phDependence>
    <temperatureDependence>
        <text evidence="2">REE-LanM complexes are stable over a broad temperature range (up to 95 degrees Celsius).</text>
    </temperatureDependence>
</comment>
<comment type="subunit">
    <text evidence="1">Monomer.</text>
</comment>
<comment type="subcellular location">
    <subcellularLocation>
        <location evidence="7">Periplasm</location>
    </subcellularLocation>
</comment>
<comment type="mass spectrometry" mass="11759.574" method="MALDI" evidence="1"/>
<comment type="biotechnology">
    <text evidence="2">Has been used for metal extraction from two distinct rare-earth elements (REEs)-containing industrial feedstocks covering a broad range of REE and non-REE concentrations, namely, precombustion coal (lignite) and electronic waste leachates. After only a single all-aqueous step, quantitative and selective recovery of the REEs from all non-REEs initially present (Li, Na, Mg, Ca, Sr, Al, Si, Mn, Fe, Co, Ni, Cu, Zn, and U) was achieved, demonstrating the universal selectivity of LanM for REEs against non-REEs and its potential application even for industrial low-grade sources.</text>
</comment>
<comment type="miscellaneous">
    <text evidence="6">Lanthanides are essential cofactors in some pyrroloquinoline quinone (PQQ)-dependent alcohol dehydrogenase enzymes in the methylotrophic bacterium M.extorquens.</text>
</comment>
<comment type="miscellaneous">
    <text evidence="1">LanM undergoes a large conformational change from a largely disordered state to a compact, ordered state, selectively in response to picomolar concentrations of all Ln(3+) (Ln = La-Lu) and Y(3+).</text>
</comment>